<evidence type="ECO:0000250" key="1"/>
<evidence type="ECO:0000305" key="2"/>
<keyword id="KW-0464">Manganese</keyword>
<keyword id="KW-0479">Metal-binding</keyword>
<keyword id="KW-0496">Mitochondrion</keyword>
<keyword id="KW-0560">Oxidoreductase</keyword>
<keyword id="KW-0809">Transit peptide</keyword>
<proteinExistence type="evidence at transcript level"/>
<feature type="transit peptide" description="Mitochondrion" evidence="1">
    <location>
        <begin position="1"/>
        <end position="20"/>
    </location>
</feature>
<feature type="chain" id="PRO_0000032875" description="Superoxide dismutase [Mn], mitochondrial">
    <location>
        <begin position="21"/>
        <end position="224"/>
    </location>
</feature>
<feature type="binding site" evidence="1">
    <location>
        <position position="46"/>
    </location>
    <ligand>
        <name>Mn(2+)</name>
        <dbReference type="ChEBI" id="CHEBI:29035"/>
    </ligand>
</feature>
<feature type="binding site" evidence="1">
    <location>
        <position position="94"/>
    </location>
    <ligand>
        <name>Mn(2+)</name>
        <dbReference type="ChEBI" id="CHEBI:29035"/>
    </ligand>
</feature>
<feature type="binding site" evidence="1">
    <location>
        <position position="177"/>
    </location>
    <ligand>
        <name>Mn(2+)</name>
        <dbReference type="ChEBI" id="CHEBI:29035"/>
    </ligand>
</feature>
<feature type="binding site" evidence="1">
    <location>
        <position position="181"/>
    </location>
    <ligand>
        <name>Mn(2+)</name>
        <dbReference type="ChEBI" id="CHEBI:29035"/>
    </ligand>
</feature>
<name>SODM_CHAFE</name>
<organism>
    <name type="scientific">Charybdis feriata</name>
    <name type="common">Crucifix crab</name>
    <name type="synonym">Cancer feriatus</name>
    <dbReference type="NCBI Taxonomy" id="65693"/>
    <lineage>
        <taxon>Eukaryota</taxon>
        <taxon>Metazoa</taxon>
        <taxon>Ecdysozoa</taxon>
        <taxon>Arthropoda</taxon>
        <taxon>Crustacea</taxon>
        <taxon>Multicrustacea</taxon>
        <taxon>Malacostraca</taxon>
        <taxon>Eumalacostraca</taxon>
        <taxon>Eucarida</taxon>
        <taxon>Decapoda</taxon>
        <taxon>Pleocyemata</taxon>
        <taxon>Brachyura</taxon>
        <taxon>Eubrachyura</taxon>
        <taxon>Portunoidea</taxon>
        <taxon>Portunidae</taxon>
        <taxon>Thalamitinae</taxon>
        <taxon>Charybdis</taxon>
    </lineage>
</organism>
<reference key="1">
    <citation type="submission" date="1997-08" db="EMBL/GenBank/DDBJ databases">
        <title>Molecular cloning, expression, and characterization of a cDNA encoding Mn-superoxide dismutase from crab Charybdis feriatus.</title>
        <authorList>
            <person name="Lin C.T."/>
            <person name="Lai Y.S."/>
            <person name="Kuo T.J."/>
            <person name="Chang T.C."/>
        </authorList>
    </citation>
    <scope>NUCLEOTIDE SEQUENCE [MRNA]</scope>
</reference>
<protein>
    <recommendedName>
        <fullName>Superoxide dismutase [Mn], mitochondrial</fullName>
        <ecNumber>1.15.1.1</ecNumber>
    </recommendedName>
</protein>
<dbReference type="EC" id="1.15.1.1"/>
<dbReference type="EMBL" id="AF019411">
    <property type="protein sequence ID" value="AAD01640.1"/>
    <property type="molecule type" value="mRNA"/>
</dbReference>
<dbReference type="SMR" id="O96347"/>
<dbReference type="GO" id="GO:0005759">
    <property type="term" value="C:mitochondrial matrix"/>
    <property type="evidence" value="ECO:0007669"/>
    <property type="project" value="UniProtKB-SubCell"/>
</dbReference>
<dbReference type="GO" id="GO:0030145">
    <property type="term" value="F:manganese ion binding"/>
    <property type="evidence" value="ECO:0007669"/>
    <property type="project" value="TreeGrafter"/>
</dbReference>
<dbReference type="GO" id="GO:0004784">
    <property type="term" value="F:superoxide dismutase activity"/>
    <property type="evidence" value="ECO:0007669"/>
    <property type="project" value="UniProtKB-EC"/>
</dbReference>
<dbReference type="FunFam" id="1.10.287.990:FF:000001">
    <property type="entry name" value="Superoxide dismutase"/>
    <property type="match status" value="1"/>
</dbReference>
<dbReference type="Gene3D" id="1.10.287.990">
    <property type="entry name" value="Fe,Mn superoxide dismutase (SOD) domain"/>
    <property type="match status" value="1"/>
</dbReference>
<dbReference type="Gene3D" id="3.55.40.20">
    <property type="entry name" value="Iron/manganese superoxide dismutase, C-terminal domain"/>
    <property type="match status" value="1"/>
</dbReference>
<dbReference type="InterPro" id="IPR050265">
    <property type="entry name" value="Fe/Mn_Superoxide_Dismutase"/>
</dbReference>
<dbReference type="InterPro" id="IPR001189">
    <property type="entry name" value="Mn/Fe_SOD"/>
</dbReference>
<dbReference type="InterPro" id="IPR019833">
    <property type="entry name" value="Mn/Fe_SOD_BS"/>
</dbReference>
<dbReference type="InterPro" id="IPR019832">
    <property type="entry name" value="Mn/Fe_SOD_C"/>
</dbReference>
<dbReference type="InterPro" id="IPR019831">
    <property type="entry name" value="Mn/Fe_SOD_N"/>
</dbReference>
<dbReference type="InterPro" id="IPR036324">
    <property type="entry name" value="Mn/Fe_SOD_N_sf"/>
</dbReference>
<dbReference type="InterPro" id="IPR036314">
    <property type="entry name" value="SOD_C_sf"/>
</dbReference>
<dbReference type="PANTHER" id="PTHR11404">
    <property type="entry name" value="SUPEROXIDE DISMUTASE 2"/>
    <property type="match status" value="1"/>
</dbReference>
<dbReference type="PANTHER" id="PTHR11404:SF6">
    <property type="entry name" value="SUPEROXIDE DISMUTASE [MN], MITOCHONDRIAL"/>
    <property type="match status" value="1"/>
</dbReference>
<dbReference type="Pfam" id="PF02777">
    <property type="entry name" value="Sod_Fe_C"/>
    <property type="match status" value="1"/>
</dbReference>
<dbReference type="Pfam" id="PF00081">
    <property type="entry name" value="Sod_Fe_N"/>
    <property type="match status" value="1"/>
</dbReference>
<dbReference type="PRINTS" id="PR01703">
    <property type="entry name" value="MNSODISMTASE"/>
</dbReference>
<dbReference type="SUPFAM" id="SSF54719">
    <property type="entry name" value="Fe,Mn superoxide dismutase (SOD), C-terminal domain"/>
    <property type="match status" value="1"/>
</dbReference>
<dbReference type="SUPFAM" id="SSF46609">
    <property type="entry name" value="Fe,Mn superoxide dismutase (SOD), N-terminal domain"/>
    <property type="match status" value="1"/>
</dbReference>
<dbReference type="PROSITE" id="PS00088">
    <property type="entry name" value="SOD_MN"/>
    <property type="match status" value="1"/>
</dbReference>
<sequence length="224" mass="24527">MLLARAFARRSLRAGLWCRQKHTLPDLPYDYGALEPTISAEIMQLHHSKHHQTYVNNLNVAEEKLAEAKEKGDVSTIISLAPALRFNGGGHINHSIFWQNLSADGGEPEGELLAAINRDFGSVENMKNQLSAQTVAVQGSGWGWLGYIAEGALQIATCPNQDPLEATTGLVPLFGIDVWEHAYYLQYKNVRRIMLKPSGISLIGRISLQGSMQQSKNATSCSGA</sequence>
<comment type="function">
    <text>Destroys superoxide anion radicals which are normally produced within the cells and which are toxic to biological systems.</text>
</comment>
<comment type="catalytic activity">
    <reaction>
        <text>2 superoxide + 2 H(+) = H2O2 + O2</text>
        <dbReference type="Rhea" id="RHEA:20696"/>
        <dbReference type="ChEBI" id="CHEBI:15378"/>
        <dbReference type="ChEBI" id="CHEBI:15379"/>
        <dbReference type="ChEBI" id="CHEBI:16240"/>
        <dbReference type="ChEBI" id="CHEBI:18421"/>
        <dbReference type="EC" id="1.15.1.1"/>
    </reaction>
</comment>
<comment type="cofactor">
    <cofactor evidence="1">
        <name>Mn(2+)</name>
        <dbReference type="ChEBI" id="CHEBI:29035"/>
    </cofactor>
    <text evidence="1">Binds 1 Mn(2+) ion per subunit.</text>
</comment>
<comment type="subunit">
    <text evidence="1">Homotetramer.</text>
</comment>
<comment type="subcellular location">
    <subcellularLocation>
        <location>Mitochondrion matrix</location>
    </subcellularLocation>
</comment>
<comment type="similarity">
    <text evidence="2">Belongs to the iron/manganese superoxide dismutase family.</text>
</comment>
<accession>O96347</accession>